<proteinExistence type="inferred from homology"/>
<dbReference type="EMBL" id="CP000946">
    <property type="protein sequence ID" value="ACA78079.1"/>
    <property type="status" value="ALT_INIT"/>
    <property type="molecule type" value="Genomic_DNA"/>
</dbReference>
<dbReference type="BMRB" id="B1IUB2"/>
<dbReference type="SMR" id="B1IUB2"/>
<dbReference type="KEGG" id="ecl:EcolC_2446"/>
<dbReference type="HOGENOM" id="CLU_155118_1_0_6"/>
<dbReference type="Gene3D" id="3.10.510.20">
    <property type="entry name" value="YcgL domain"/>
    <property type="match status" value="1"/>
</dbReference>
<dbReference type="HAMAP" id="MF_01866">
    <property type="entry name" value="UPF0745"/>
    <property type="match status" value="1"/>
</dbReference>
<dbReference type="InterPro" id="IPR038068">
    <property type="entry name" value="YcgL-like_sf"/>
</dbReference>
<dbReference type="InterPro" id="IPR027354">
    <property type="entry name" value="YcgL_dom"/>
</dbReference>
<dbReference type="PANTHER" id="PTHR38109">
    <property type="entry name" value="PROTEIN YCGL"/>
    <property type="match status" value="1"/>
</dbReference>
<dbReference type="PANTHER" id="PTHR38109:SF1">
    <property type="entry name" value="PROTEIN YCGL"/>
    <property type="match status" value="1"/>
</dbReference>
<dbReference type="Pfam" id="PF05166">
    <property type="entry name" value="YcgL"/>
    <property type="match status" value="1"/>
</dbReference>
<dbReference type="SUPFAM" id="SSF160191">
    <property type="entry name" value="YcgL-like"/>
    <property type="match status" value="1"/>
</dbReference>
<dbReference type="PROSITE" id="PS51648">
    <property type="entry name" value="YCGL"/>
    <property type="match status" value="1"/>
</dbReference>
<evidence type="ECO:0000255" key="1">
    <source>
        <dbReference type="HAMAP-Rule" id="MF_01866"/>
    </source>
</evidence>
<evidence type="ECO:0000305" key="2"/>
<accession>B1IUB2</accession>
<gene>
    <name evidence="1" type="primary">ycgL</name>
    <name type="ordered locus">EcolC_2446</name>
</gene>
<comment type="sequence caution" evidence="2">
    <conflict type="erroneous initiation">
        <sequence resource="EMBL-CDS" id="ACA78079"/>
    </conflict>
</comment>
<reference key="1">
    <citation type="submission" date="2008-02" db="EMBL/GenBank/DDBJ databases">
        <title>Complete sequence of Escherichia coli C str. ATCC 8739.</title>
        <authorList>
            <person name="Copeland A."/>
            <person name="Lucas S."/>
            <person name="Lapidus A."/>
            <person name="Glavina del Rio T."/>
            <person name="Dalin E."/>
            <person name="Tice H."/>
            <person name="Bruce D."/>
            <person name="Goodwin L."/>
            <person name="Pitluck S."/>
            <person name="Kiss H."/>
            <person name="Brettin T."/>
            <person name="Detter J.C."/>
            <person name="Han C."/>
            <person name="Kuske C.R."/>
            <person name="Schmutz J."/>
            <person name="Larimer F."/>
            <person name="Land M."/>
            <person name="Hauser L."/>
            <person name="Kyrpides N."/>
            <person name="Mikhailova N."/>
            <person name="Ingram L."/>
            <person name="Richardson P."/>
        </authorList>
    </citation>
    <scope>NUCLEOTIDE SEQUENCE [LARGE SCALE GENOMIC DNA]</scope>
    <source>
        <strain>ATCC 8739 / DSM 1576 / NBRC 3972 / NCIMB 8545 / WDCM 00012 / Crooks</strain>
    </source>
</reference>
<sequence length="108" mass="12400">MPKPGILKSKSMFCVIYRSSKRDQTYLYVEKKDDFSRVPEELMKGFGQPQLAMILPLDGRKKLVNADIEKVKLALTEQGYYLQLPPPPEDLLKQHLSVMGQKTDDTNK</sequence>
<organism>
    <name type="scientific">Escherichia coli (strain ATCC 8739 / DSM 1576 / NBRC 3972 / NCIMB 8545 / WDCM 00012 / Crooks)</name>
    <dbReference type="NCBI Taxonomy" id="481805"/>
    <lineage>
        <taxon>Bacteria</taxon>
        <taxon>Pseudomonadati</taxon>
        <taxon>Pseudomonadota</taxon>
        <taxon>Gammaproteobacteria</taxon>
        <taxon>Enterobacterales</taxon>
        <taxon>Enterobacteriaceae</taxon>
        <taxon>Escherichia</taxon>
    </lineage>
</organism>
<protein>
    <recommendedName>
        <fullName evidence="1">Protein YcgL</fullName>
    </recommendedName>
</protein>
<feature type="chain" id="PRO_0000375290" description="Protein YcgL">
    <location>
        <begin position="1"/>
        <end position="108"/>
    </location>
</feature>
<feature type="domain" description="YcgL" evidence="1">
    <location>
        <begin position="12"/>
        <end position="96"/>
    </location>
</feature>
<name>YCGL_ECOLC</name>